<protein>
    <recommendedName>
        <fullName>Vacuolar amino acid transporter 3</fullName>
    </recommendedName>
</protein>
<evidence type="ECO:0000255" key="1"/>
<evidence type="ECO:0000256" key="2">
    <source>
        <dbReference type="SAM" id="MobiDB-lite"/>
    </source>
</evidence>
<evidence type="ECO:0000269" key="3">
    <source>
    </source>
</evidence>
<evidence type="ECO:0000305" key="4"/>
<evidence type="ECO:0007744" key="5">
    <source>
    </source>
</evidence>
<evidence type="ECO:0007744" key="6">
    <source>
    </source>
</evidence>
<evidence type="ECO:0007744" key="7">
    <source>
    </source>
</evidence>
<keyword id="KW-0029">Amino-acid transport</keyword>
<keyword id="KW-0472">Membrane</keyword>
<keyword id="KW-0597">Phosphoprotein</keyword>
<keyword id="KW-1185">Reference proteome</keyword>
<keyword id="KW-0812">Transmembrane</keyword>
<keyword id="KW-1133">Transmembrane helix</keyword>
<keyword id="KW-0813">Transport</keyword>
<keyword id="KW-0926">Vacuole</keyword>
<name>AVT3_YEAST</name>
<comment type="function">
    <text evidence="3">Involved in amino acid efflux from the vacuole to the cytoplasm. Capable of transporting large neutral amino acids including tyrosine, glutamine, asparagine, isoleucine and leucine.</text>
</comment>
<comment type="interaction">
    <interactant intactId="EBI-20799445">
        <id>P36062</id>
    </interactant>
    <interactant intactId="EBI-17590">
        <id>P32568</id>
        <label>SNQ2</label>
    </interactant>
    <organismsDiffer>false</organismsDiffer>
    <experiments>2</experiments>
</comment>
<comment type="subcellular location">
    <subcellularLocation>
        <location evidence="3">Vacuole membrane</location>
        <topology evidence="3">Multi-pass membrane protein</topology>
    </subcellularLocation>
</comment>
<comment type="similarity">
    <text evidence="4">Belongs to the amino acid/polyamine transporter 2 family.</text>
</comment>
<feature type="chain" id="PRO_0000093836" description="Vacuolar amino acid transporter 3">
    <location>
        <begin position="1"/>
        <end position="692"/>
    </location>
</feature>
<feature type="transmembrane region" description="Helical" evidence="1">
    <location>
        <begin position="302"/>
        <end position="322"/>
    </location>
</feature>
<feature type="transmembrane region" description="Helical" evidence="1">
    <location>
        <begin position="329"/>
        <end position="349"/>
    </location>
</feature>
<feature type="transmembrane region" description="Helical" evidence="1">
    <location>
        <begin position="374"/>
        <end position="394"/>
    </location>
</feature>
<feature type="transmembrane region" description="Helical" evidence="1">
    <location>
        <begin position="412"/>
        <end position="432"/>
    </location>
</feature>
<feature type="transmembrane region" description="Helical" evidence="1">
    <location>
        <begin position="443"/>
        <end position="463"/>
    </location>
</feature>
<feature type="transmembrane region" description="Helical" evidence="1">
    <location>
        <begin position="483"/>
        <end position="503"/>
    </location>
</feature>
<feature type="transmembrane region" description="Helical" evidence="1">
    <location>
        <begin position="519"/>
        <end position="539"/>
    </location>
</feature>
<feature type="transmembrane region" description="Helical" evidence="1">
    <location>
        <begin position="561"/>
        <end position="581"/>
    </location>
</feature>
<feature type="transmembrane region" description="Helical" evidence="1">
    <location>
        <begin position="607"/>
        <end position="627"/>
    </location>
</feature>
<feature type="transmembrane region" description="Helical" evidence="1">
    <location>
        <begin position="630"/>
        <end position="650"/>
    </location>
</feature>
<feature type="transmembrane region" description="Helical" evidence="1">
    <location>
        <begin position="665"/>
        <end position="685"/>
    </location>
</feature>
<feature type="region of interest" description="Disordered" evidence="2">
    <location>
        <begin position="1"/>
        <end position="71"/>
    </location>
</feature>
<feature type="region of interest" description="Disordered" evidence="2">
    <location>
        <begin position="135"/>
        <end position="170"/>
    </location>
</feature>
<feature type="region of interest" description="Disordered" evidence="2">
    <location>
        <begin position="258"/>
        <end position="294"/>
    </location>
</feature>
<feature type="compositionally biased region" description="Polar residues" evidence="2">
    <location>
        <begin position="1"/>
        <end position="14"/>
    </location>
</feature>
<feature type="compositionally biased region" description="Low complexity" evidence="2">
    <location>
        <begin position="15"/>
        <end position="24"/>
    </location>
</feature>
<feature type="compositionally biased region" description="Polar residues" evidence="2">
    <location>
        <begin position="28"/>
        <end position="38"/>
    </location>
</feature>
<feature type="compositionally biased region" description="Low complexity" evidence="2">
    <location>
        <begin position="141"/>
        <end position="153"/>
    </location>
</feature>
<feature type="compositionally biased region" description="Polar residues" evidence="2">
    <location>
        <begin position="154"/>
        <end position="167"/>
    </location>
</feature>
<feature type="compositionally biased region" description="Acidic residues" evidence="2">
    <location>
        <begin position="258"/>
        <end position="279"/>
    </location>
</feature>
<feature type="modified residue" description="Phosphoserine" evidence="5">
    <location>
        <position position="59"/>
    </location>
</feature>
<feature type="modified residue" description="Phosphoserine" evidence="7">
    <location>
        <position position="119"/>
    </location>
</feature>
<feature type="modified residue" description="Phosphoserine" evidence="6 7">
    <location>
        <position position="121"/>
    </location>
</feature>
<feature type="modified residue" description="Phosphoserine" evidence="6">
    <location>
        <position position="165"/>
    </location>
</feature>
<proteinExistence type="evidence at protein level"/>
<organism>
    <name type="scientific">Saccharomyces cerevisiae (strain ATCC 204508 / S288c)</name>
    <name type="common">Baker's yeast</name>
    <dbReference type="NCBI Taxonomy" id="559292"/>
    <lineage>
        <taxon>Eukaryota</taxon>
        <taxon>Fungi</taxon>
        <taxon>Dikarya</taxon>
        <taxon>Ascomycota</taxon>
        <taxon>Saccharomycotina</taxon>
        <taxon>Saccharomycetes</taxon>
        <taxon>Saccharomycetales</taxon>
        <taxon>Saccharomycetaceae</taxon>
        <taxon>Saccharomyces</taxon>
    </lineage>
</organism>
<reference key="1">
    <citation type="journal article" date="1994" name="Yeast">
        <title>DNA sequencing of a 36.2 kb fragment located between the FAS1 and LAP loci of chromosome XI of Saccharomyces cerevisiae.</title>
        <authorList>
            <person name="Vandenbol M."/>
            <person name="Bolle P.-A."/>
            <person name="Dion C."/>
            <person name="Portetelle D."/>
            <person name="Hilger F."/>
        </authorList>
    </citation>
    <scope>NUCLEOTIDE SEQUENCE [GENOMIC DNA]</scope>
    <source>
        <strain>ATCC 204508 / S288c</strain>
    </source>
</reference>
<reference key="2">
    <citation type="journal article" date="1994" name="Nature">
        <title>Complete DNA sequence of yeast chromosome XI.</title>
        <authorList>
            <person name="Dujon B."/>
            <person name="Alexandraki D."/>
            <person name="Andre B."/>
            <person name="Ansorge W."/>
            <person name="Baladron V."/>
            <person name="Ballesta J.P.G."/>
            <person name="Banrevi A."/>
            <person name="Bolle P.-A."/>
            <person name="Bolotin-Fukuhara M."/>
            <person name="Bossier P."/>
            <person name="Bou G."/>
            <person name="Boyer J."/>
            <person name="Buitrago M.J."/>
            <person name="Cheret G."/>
            <person name="Colleaux L."/>
            <person name="Daignan-Fornier B."/>
            <person name="del Rey F."/>
            <person name="Dion C."/>
            <person name="Domdey H."/>
            <person name="Duesterhoeft A."/>
            <person name="Duesterhus S."/>
            <person name="Entian K.-D."/>
            <person name="Erfle H."/>
            <person name="Esteban P.F."/>
            <person name="Feldmann H."/>
            <person name="Fernandes L."/>
            <person name="Fobo G.M."/>
            <person name="Fritz C."/>
            <person name="Fukuhara H."/>
            <person name="Gabel C."/>
            <person name="Gaillon L."/>
            <person name="Garcia-Cantalejo J.M."/>
            <person name="Garcia-Ramirez J.J."/>
            <person name="Gent M.E."/>
            <person name="Ghazvini M."/>
            <person name="Goffeau A."/>
            <person name="Gonzalez A."/>
            <person name="Grothues D."/>
            <person name="Guerreiro P."/>
            <person name="Hegemann J.H."/>
            <person name="Hewitt N."/>
            <person name="Hilger F."/>
            <person name="Hollenberg C.P."/>
            <person name="Horaitis O."/>
            <person name="Indge K.J."/>
            <person name="Jacquier A."/>
            <person name="James C.M."/>
            <person name="Jauniaux J.-C."/>
            <person name="Jimenez A."/>
            <person name="Keuchel H."/>
            <person name="Kirchrath L."/>
            <person name="Kleine K."/>
            <person name="Koetter P."/>
            <person name="Legrain P."/>
            <person name="Liebl S."/>
            <person name="Louis E.J."/>
            <person name="Maia e Silva A."/>
            <person name="Marck C."/>
            <person name="Monnier A.-L."/>
            <person name="Moestl D."/>
            <person name="Mueller S."/>
            <person name="Obermaier B."/>
            <person name="Oliver S.G."/>
            <person name="Pallier C."/>
            <person name="Pascolo S."/>
            <person name="Pfeiffer F."/>
            <person name="Philippsen P."/>
            <person name="Planta R.J."/>
            <person name="Pohl F.M."/>
            <person name="Pohl T.M."/>
            <person name="Poehlmann R."/>
            <person name="Portetelle D."/>
            <person name="Purnelle B."/>
            <person name="Puzos V."/>
            <person name="Ramezani Rad M."/>
            <person name="Rasmussen S.W."/>
            <person name="Remacha M.A."/>
            <person name="Revuelta J.L."/>
            <person name="Richard G.-F."/>
            <person name="Rieger M."/>
            <person name="Rodrigues-Pousada C."/>
            <person name="Rose M."/>
            <person name="Rupp T."/>
            <person name="Santos M.A."/>
            <person name="Schwager C."/>
            <person name="Sensen C."/>
            <person name="Skala J."/>
            <person name="Soares H."/>
            <person name="Sor F."/>
            <person name="Stegemann J."/>
            <person name="Tettelin H."/>
            <person name="Thierry A."/>
            <person name="Tzermia M."/>
            <person name="Urrestarazu L.A."/>
            <person name="van Dyck L."/>
            <person name="van Vliet-Reedijk J.C."/>
            <person name="Valens M."/>
            <person name="Vandenbol M."/>
            <person name="Vilela C."/>
            <person name="Vissers S."/>
            <person name="von Wettstein D."/>
            <person name="Voss H."/>
            <person name="Wiemann S."/>
            <person name="Xu G."/>
            <person name="Zimmermann J."/>
            <person name="Haasemann M."/>
            <person name="Becker I."/>
            <person name="Mewes H.-W."/>
        </authorList>
    </citation>
    <scope>NUCLEOTIDE SEQUENCE [LARGE SCALE GENOMIC DNA]</scope>
    <source>
        <strain>ATCC 204508 / S288c</strain>
    </source>
</reference>
<reference key="3">
    <citation type="journal article" date="2014" name="G3 (Bethesda)">
        <title>The reference genome sequence of Saccharomyces cerevisiae: Then and now.</title>
        <authorList>
            <person name="Engel S.R."/>
            <person name="Dietrich F.S."/>
            <person name="Fisk D.G."/>
            <person name="Binkley G."/>
            <person name="Balakrishnan R."/>
            <person name="Costanzo M.C."/>
            <person name="Dwight S.S."/>
            <person name="Hitz B.C."/>
            <person name="Karra K."/>
            <person name="Nash R.S."/>
            <person name="Weng S."/>
            <person name="Wong E.D."/>
            <person name="Lloyd P."/>
            <person name="Skrzypek M.S."/>
            <person name="Miyasato S.R."/>
            <person name="Simison M."/>
            <person name="Cherry J.M."/>
        </authorList>
    </citation>
    <scope>GENOME REANNOTATION</scope>
    <source>
        <strain>ATCC 204508 / S288c</strain>
    </source>
</reference>
<reference key="4">
    <citation type="journal article" date="2001" name="J. Biol. Chem.">
        <title>A family of yeast proteins mediating bidirectional vacuolar amino acid transport.</title>
        <authorList>
            <person name="Russnak R."/>
            <person name="Konczal D."/>
            <person name="McIntire S.L."/>
        </authorList>
    </citation>
    <scope>FUNCTION</scope>
    <scope>SUBCELLULAR LOCATION</scope>
</reference>
<reference key="5">
    <citation type="journal article" date="2007" name="J. Proteome Res.">
        <title>Large-scale phosphorylation analysis of alpha-factor-arrested Saccharomyces cerevisiae.</title>
        <authorList>
            <person name="Li X."/>
            <person name="Gerber S.A."/>
            <person name="Rudner A.D."/>
            <person name="Beausoleil S.A."/>
            <person name="Haas W."/>
            <person name="Villen J."/>
            <person name="Elias J.E."/>
            <person name="Gygi S.P."/>
        </authorList>
    </citation>
    <scope>PHOSPHORYLATION [LARGE SCALE ANALYSIS] AT SER-59</scope>
    <scope>IDENTIFICATION BY MASS SPECTROMETRY [LARGE SCALE ANALYSIS]</scope>
    <source>
        <strain>ADR376</strain>
    </source>
</reference>
<reference key="6">
    <citation type="journal article" date="2008" name="Mol. Cell. Proteomics">
        <title>A multidimensional chromatography technology for in-depth phosphoproteome analysis.</title>
        <authorList>
            <person name="Albuquerque C.P."/>
            <person name="Smolka M.B."/>
            <person name="Payne S.H."/>
            <person name="Bafna V."/>
            <person name="Eng J."/>
            <person name="Zhou H."/>
        </authorList>
    </citation>
    <scope>PHOSPHORYLATION [LARGE SCALE ANALYSIS] AT SER-121 AND SER-165</scope>
    <scope>IDENTIFICATION BY MASS SPECTROMETRY [LARGE SCALE ANALYSIS]</scope>
</reference>
<reference key="7">
    <citation type="journal article" date="2009" name="Science">
        <title>Global analysis of Cdk1 substrate phosphorylation sites provides insights into evolution.</title>
        <authorList>
            <person name="Holt L.J."/>
            <person name="Tuch B.B."/>
            <person name="Villen J."/>
            <person name="Johnson A.D."/>
            <person name="Gygi S.P."/>
            <person name="Morgan D.O."/>
        </authorList>
    </citation>
    <scope>PHOSPHORYLATION [LARGE SCALE ANALYSIS] AT SER-119 AND SER-121</scope>
    <scope>IDENTIFICATION BY MASS SPECTROMETRY [LARGE SCALE ANALYSIS]</scope>
</reference>
<reference key="8">
    <citation type="journal article" date="2012" name="Proc. Natl. Acad. Sci. U.S.A.">
        <title>N-terminal acetylome analyses and functional insights of the N-terminal acetyltransferase NatB.</title>
        <authorList>
            <person name="Van Damme P."/>
            <person name="Lasa M."/>
            <person name="Polevoda B."/>
            <person name="Gazquez C."/>
            <person name="Elosegui-Artola A."/>
            <person name="Kim D.S."/>
            <person name="De Juan-Pardo E."/>
            <person name="Demeyer K."/>
            <person name="Hole K."/>
            <person name="Larrea E."/>
            <person name="Timmerman E."/>
            <person name="Prieto J."/>
            <person name="Arnesen T."/>
            <person name="Sherman F."/>
            <person name="Gevaert K."/>
            <person name="Aldabe R."/>
        </authorList>
    </citation>
    <scope>IDENTIFICATION BY MASS SPECTROMETRY [LARGE SCALE ANALYSIS]</scope>
</reference>
<sequence length="692" mass="75459">MNGKEVSSGSGRTQSNNNKKNNNGGSTGISHASGSPLTDGNGGNSNGNSRSRSRSRKSSGTTGGLLKKPPLLVNNEAVHASVPDASHTSCNNGTLEVSINNPEPHVVDAVARHLIRNPSNSLQLQGGDITRDLYKWTNDHPSSPSQYQYPSQPALSTSIPSQAPSFSNRKRSMSFSAASIASSSHLNNNSEANGNPLAAIGLAPAPMTHEEIRAPGGFRRSFIIQKRRKHNVDAPIPNFFTRNFIEFLTLYGHFAGEDLSEEEEEEEETEEEPEEEALETESTQLVSREHGRHPHKSSTVKAVLLLLKSFVGTGVLFLPKAFHNGGWGFSALCLLSCALISYGCFVSLITTKDKVGVDGYGDMGRILYGPKMKFAILSSIALSQIGFSAAYTVFTATNLQVFSENFFHLKPGSISLATYIFAQVLIFVPLSLTRNIAKLSGTALIADLFILLGLVYVYVYSIYYIAVNGVASDTMLMFNKADWSLFIGTAIFTFEGIGLLIPIQESMKHPKHFRPSLSAVMCIVAVIFISCGLLCYAAFGSDVKTVVLLNFPQDTSYTLTVQLLYALAILLSTPLQLFPAIRILENWTFPSNASGKYNPKVKWLKNYFRCAIVVLTSILAWVGANDLDKFVSLVGSFACIPLIYIYPPLLHYKASILSGTSRARLLLDLIVIVFGVAVMAYTSWQTIKMWSQ</sequence>
<dbReference type="EMBL" id="Z26877">
    <property type="protein sequence ID" value="CAA81508.1"/>
    <property type="molecule type" value="Genomic_DNA"/>
</dbReference>
<dbReference type="EMBL" id="Z28146">
    <property type="protein sequence ID" value="CAA81988.1"/>
    <property type="molecule type" value="Genomic_DNA"/>
</dbReference>
<dbReference type="EMBL" id="BK006944">
    <property type="protein sequence ID" value="DAA09016.1"/>
    <property type="molecule type" value="Genomic_DNA"/>
</dbReference>
<dbReference type="PIR" id="S37976">
    <property type="entry name" value="S37976"/>
</dbReference>
<dbReference type="RefSeq" id="NP_012776.1">
    <property type="nucleotide sequence ID" value="NM_001179712.1"/>
</dbReference>
<dbReference type="SMR" id="P36062"/>
<dbReference type="BioGRID" id="33990">
    <property type="interactions" value="96"/>
</dbReference>
<dbReference type="DIP" id="DIP-4105N"/>
<dbReference type="FunCoup" id="P36062">
    <property type="interactions" value="704"/>
</dbReference>
<dbReference type="IntAct" id="P36062">
    <property type="interactions" value="7"/>
</dbReference>
<dbReference type="MINT" id="P36062"/>
<dbReference type="STRING" id="4932.YKL146W"/>
<dbReference type="TCDB" id="2.A.18.7.1">
    <property type="family name" value="the amino acid/auxin permease (aaap) family"/>
</dbReference>
<dbReference type="iPTMnet" id="P36062"/>
<dbReference type="PaxDb" id="4932-YKL146W"/>
<dbReference type="PeptideAtlas" id="P36062"/>
<dbReference type="EnsemblFungi" id="YKL146W_mRNA">
    <property type="protein sequence ID" value="YKL146W"/>
    <property type="gene ID" value="YKL146W"/>
</dbReference>
<dbReference type="GeneID" id="853710"/>
<dbReference type="KEGG" id="sce:YKL146W"/>
<dbReference type="AGR" id="SGD:S000001629"/>
<dbReference type="SGD" id="S000001629">
    <property type="gene designation" value="AVT3"/>
</dbReference>
<dbReference type="VEuPathDB" id="FungiDB:YKL146W"/>
<dbReference type="eggNOG" id="KOG1304">
    <property type="taxonomic scope" value="Eukaryota"/>
</dbReference>
<dbReference type="HOGENOM" id="CLU_009646_3_2_1"/>
<dbReference type="InParanoid" id="P36062"/>
<dbReference type="OMA" id="QESMKQP"/>
<dbReference type="OrthoDB" id="1684102at2759"/>
<dbReference type="BioCyc" id="YEAST:G3O-31921-MONOMER"/>
<dbReference type="BioGRID-ORCS" id="853710">
    <property type="hits" value="1 hit in 10 CRISPR screens"/>
</dbReference>
<dbReference type="PRO" id="PR:P36062"/>
<dbReference type="Proteomes" id="UP000002311">
    <property type="component" value="Chromosome XI"/>
</dbReference>
<dbReference type="RNAct" id="P36062">
    <property type="molecule type" value="protein"/>
</dbReference>
<dbReference type="GO" id="GO:0000324">
    <property type="term" value="C:fungal-type vacuole"/>
    <property type="evidence" value="ECO:0000314"/>
    <property type="project" value="SGD"/>
</dbReference>
<dbReference type="GO" id="GO:0000329">
    <property type="term" value="C:fungal-type vacuole membrane"/>
    <property type="evidence" value="ECO:0000315"/>
    <property type="project" value="SGD"/>
</dbReference>
<dbReference type="GO" id="GO:0005774">
    <property type="term" value="C:vacuolar membrane"/>
    <property type="evidence" value="ECO:0000318"/>
    <property type="project" value="GO_Central"/>
</dbReference>
<dbReference type="GO" id="GO:0015186">
    <property type="term" value="F:L-glutamine transmembrane transporter activity"/>
    <property type="evidence" value="ECO:0000315"/>
    <property type="project" value="SGD"/>
</dbReference>
<dbReference type="GO" id="GO:0015188">
    <property type="term" value="F:L-isoleucine transmembrane transporter activity"/>
    <property type="evidence" value="ECO:0000315"/>
    <property type="project" value="SGD"/>
</dbReference>
<dbReference type="GO" id="GO:0005302">
    <property type="term" value="F:L-tyrosine transmembrane transporter activity"/>
    <property type="evidence" value="ECO:0000315"/>
    <property type="project" value="SGD"/>
</dbReference>
<dbReference type="GO" id="GO:0032974">
    <property type="term" value="P:amino acid transmembrane export from vacuole"/>
    <property type="evidence" value="ECO:0000315"/>
    <property type="project" value="SGD"/>
</dbReference>
<dbReference type="GO" id="GO:0003333">
    <property type="term" value="P:amino acid transmembrane transport"/>
    <property type="evidence" value="ECO:0000318"/>
    <property type="project" value="GO_Central"/>
</dbReference>
<dbReference type="GO" id="GO:0015824">
    <property type="term" value="P:proline transport"/>
    <property type="evidence" value="ECO:0000315"/>
    <property type="project" value="SGD"/>
</dbReference>
<dbReference type="InterPro" id="IPR013057">
    <property type="entry name" value="AA_transpt_TM"/>
</dbReference>
<dbReference type="PANTHER" id="PTHR22950">
    <property type="entry name" value="AMINO ACID TRANSPORTER"/>
    <property type="match status" value="1"/>
</dbReference>
<dbReference type="PANTHER" id="PTHR22950:SF530">
    <property type="entry name" value="VACUOLAR AMINO ACID TRANSPORTER 3"/>
    <property type="match status" value="1"/>
</dbReference>
<dbReference type="Pfam" id="PF01490">
    <property type="entry name" value="Aa_trans"/>
    <property type="match status" value="1"/>
</dbReference>
<accession>P36062</accession>
<accession>D6VX50</accession>
<gene>
    <name type="primary">AVT3</name>
    <name type="ordered locus">YKL146W</name>
    <name type="ORF">YKL600</name>
</gene>